<accession>C6KTD0</accession>
<reference evidence="9" key="1">
    <citation type="journal article" date="2002" name="Nature">
        <title>Genome sequence of the human malaria parasite Plasmodium falciparum.</title>
        <authorList>
            <person name="Gardner M.J."/>
            <person name="Hall N."/>
            <person name="Fung E."/>
            <person name="White O."/>
            <person name="Berriman M."/>
            <person name="Hyman R.W."/>
            <person name="Carlton J.M."/>
            <person name="Pain A."/>
            <person name="Nelson K.E."/>
            <person name="Bowman S."/>
            <person name="Paulsen I.T."/>
            <person name="James K.D."/>
            <person name="Eisen J.A."/>
            <person name="Rutherford K.M."/>
            <person name="Salzberg S.L."/>
            <person name="Craig A."/>
            <person name="Kyes S."/>
            <person name="Chan M.-S."/>
            <person name="Nene V."/>
            <person name="Shallom S.J."/>
            <person name="Suh B."/>
            <person name="Peterson J."/>
            <person name="Angiuoli S."/>
            <person name="Pertea M."/>
            <person name="Allen J."/>
            <person name="Selengut J."/>
            <person name="Haft D."/>
            <person name="Mather M.W."/>
            <person name="Vaidya A.B."/>
            <person name="Martin D.M.A."/>
            <person name="Fairlamb A.H."/>
            <person name="Fraunholz M.J."/>
            <person name="Roos D.S."/>
            <person name="Ralph S.A."/>
            <person name="McFadden G.I."/>
            <person name="Cummings L.M."/>
            <person name="Subramanian G.M."/>
            <person name="Mungall C."/>
            <person name="Venter J.C."/>
            <person name="Carucci D.J."/>
            <person name="Hoffman S.L."/>
            <person name="Newbold C."/>
            <person name="Davis R.W."/>
            <person name="Fraser C.M."/>
            <person name="Barrell B.G."/>
        </authorList>
    </citation>
    <scope>NUCLEOTIDE SEQUENCE [LARGE SCALE GENOMIC DNA]</scope>
    <source>
        <strain evidence="9">3D7</strain>
    </source>
</reference>
<reference evidence="9" key="2">
    <citation type="journal article" date="2002" name="Nature">
        <title>Sequence of Plasmodium falciparum chromosomes 1, 3-9 and 13.</title>
        <authorList>
            <person name="Hall N."/>
            <person name="Pain A."/>
            <person name="Berriman M."/>
            <person name="Churcher C.M."/>
            <person name="Harris B."/>
            <person name="Harris D."/>
            <person name="Mungall K.L."/>
            <person name="Bowman S."/>
            <person name="Atkin R."/>
            <person name="Baker S."/>
            <person name="Barron A."/>
            <person name="Brooks K."/>
            <person name="Buckee C.O."/>
            <person name="Burrows C."/>
            <person name="Cherevach I."/>
            <person name="Chillingworth C."/>
            <person name="Chillingworth T."/>
            <person name="Christodoulou Z."/>
            <person name="Clark L."/>
            <person name="Clark R."/>
            <person name="Corton C."/>
            <person name="Cronin A."/>
            <person name="Davies R.M."/>
            <person name="Davis P."/>
            <person name="Dear P."/>
            <person name="Dearden F."/>
            <person name="Doggett J."/>
            <person name="Feltwell T."/>
            <person name="Goble A."/>
            <person name="Goodhead I."/>
            <person name="Gwilliam R."/>
            <person name="Hamlin N."/>
            <person name="Hance Z."/>
            <person name="Harper D."/>
            <person name="Hauser H."/>
            <person name="Hornsby T."/>
            <person name="Holroyd S."/>
            <person name="Horrocks P."/>
            <person name="Humphray S."/>
            <person name="Jagels K."/>
            <person name="James K.D."/>
            <person name="Johnson D."/>
            <person name="Kerhornou A."/>
            <person name="Knights A."/>
            <person name="Konfortov B."/>
            <person name="Kyes S."/>
            <person name="Larke N."/>
            <person name="Lawson D."/>
            <person name="Lennard N."/>
            <person name="Line A."/>
            <person name="Maddison M."/>
            <person name="Mclean J."/>
            <person name="Mooney P."/>
            <person name="Moule S."/>
            <person name="Murphy L."/>
            <person name="Oliver K."/>
            <person name="Ormond D."/>
            <person name="Price C."/>
            <person name="Quail M.A."/>
            <person name="Rabbinowitsch E."/>
            <person name="Rajandream M.A."/>
            <person name="Rutter S."/>
            <person name="Rutherford K.M."/>
            <person name="Sanders M."/>
            <person name="Simmonds M."/>
            <person name="Seeger K."/>
            <person name="Sharp S."/>
            <person name="Smith R."/>
            <person name="Squares R."/>
            <person name="Squares S."/>
            <person name="Stevens K."/>
            <person name="Taylor K."/>
            <person name="Tivey A."/>
            <person name="Unwin L."/>
            <person name="Whitehead S."/>
            <person name="Woodward J.R."/>
            <person name="Sulston J.E."/>
            <person name="Craig A."/>
            <person name="Newbold C."/>
            <person name="Barrell B.G."/>
        </authorList>
    </citation>
    <scope>NUCLEOTIDE SEQUENCE [LARGE SCALE GENOMIC DNA]</scope>
    <source>
        <strain evidence="9">3D7</strain>
    </source>
</reference>
<reference evidence="7" key="3">
    <citation type="journal article" date="2018" name="Sci. Rep.">
        <title>Heterologous Expression of a Novel Drug Transporter from the Malaria Parasite Alters Resistance to Quinoline Antimalarials.</title>
        <authorList>
            <person name="Tindall S.M."/>
            <person name="Vallieres C."/>
            <person name="Lakhani D.H."/>
            <person name="Islahudin F."/>
            <person name="Ting K.N."/>
            <person name="Avery S.V."/>
        </authorList>
    </citation>
    <scope>FUNCTION</scope>
    <scope>MUTAGENESIS OF THR-162</scope>
</reference>
<reference evidence="7" key="4">
    <citation type="journal article" date="2023" name="Nat. Microbiol.">
        <title>Chloroquine resistance evolution in Plasmodium falciparum is mediated by the putative amino acid transporter AAT1.</title>
        <authorList>
            <person name="Amambua-Ngwa A."/>
            <person name="Button-Simons K.A."/>
            <person name="Li X."/>
            <person name="Kumar S."/>
            <person name="Brenneman K.V."/>
            <person name="Ferrari M."/>
            <person name="Checkley L.A."/>
            <person name="Haile M.T."/>
            <person name="Shoue D.A."/>
            <person name="McDew-White M."/>
            <person name="Tindall S.M."/>
            <person name="Reyes A."/>
            <person name="Delgado E."/>
            <person name="Dalhoff H."/>
            <person name="Larbalestier J.K."/>
            <person name="Amato R."/>
            <person name="Pearson R.D."/>
            <person name="Taylor A.B."/>
            <person name="Nosten F.H."/>
            <person name="D'Alessandro U."/>
            <person name="Kwiatkowski D."/>
            <person name="Cheeseman I.H."/>
            <person name="Kappe S.H.I."/>
            <person name="Avery S.V."/>
            <person name="Conway D.J."/>
            <person name="Vaughan A.M."/>
            <person name="Ferdig M.T."/>
            <person name="Anderson T.J.C."/>
        </authorList>
    </citation>
    <scope>VARIANTS LEU-258; SER-313; GLU-454 AND ASN-541</scope>
    <scope>MUTAGENESIS OF THR-162</scope>
</reference>
<proteinExistence type="evidence at protein level"/>
<comment type="function">
    <text evidence="1 4">Putative amino acid transporter (PubMed:29410428). Probably transports tryptophan (PubMed:29410428). Involved in maintaining the osmotic homeostasis of the digestive vacuole (By similarity). Important for the timely development and growth of the asexual-stage parasites and male gametocyte maturation (By similarity).</text>
</comment>
<comment type="subcellular location">
    <subcellularLocation>
        <location evidence="1">Vacuole membrane</location>
        <topology evidence="2">Multi-pass membrane protein</topology>
    </subcellularLocation>
</comment>
<comment type="miscellaneous">
    <text evidence="4 5">Can transport antimalarial drugs such as chloroquine, amodiaquine, mefloquine and quinine.</text>
</comment>
<comment type="similarity">
    <text evidence="7">Belongs to the amino acid/polyamine transporter 2 family.</text>
</comment>
<keyword id="KW-0029">Amino-acid transport</keyword>
<keyword id="KW-0472">Membrane</keyword>
<keyword id="KW-1185">Reference proteome</keyword>
<keyword id="KW-0812">Transmembrane</keyword>
<keyword id="KW-1133">Transmembrane helix</keyword>
<keyword id="KW-0813">Transport</keyword>
<keyword id="KW-0926">Vacuole</keyword>
<organism evidence="9">
    <name type="scientific">Plasmodium falciparum (isolate 3D7)</name>
    <dbReference type="NCBI Taxonomy" id="36329"/>
    <lineage>
        <taxon>Eukaryota</taxon>
        <taxon>Sar</taxon>
        <taxon>Alveolata</taxon>
        <taxon>Apicomplexa</taxon>
        <taxon>Aconoidasida</taxon>
        <taxon>Haemosporida</taxon>
        <taxon>Plasmodiidae</taxon>
        <taxon>Plasmodium</taxon>
        <taxon>Plasmodium (Laverania)</taxon>
    </lineage>
</organism>
<gene>
    <name evidence="7" type="primary">AAT1</name>
    <name evidence="8" type="ORF">PF3D7_0629500</name>
</gene>
<evidence type="ECO:0000250" key="1">
    <source>
        <dbReference type="UniProtKB" id="A0A509AMM2"/>
    </source>
</evidence>
<evidence type="ECO:0000255" key="2"/>
<evidence type="ECO:0000256" key="3">
    <source>
        <dbReference type="SAM" id="MobiDB-lite"/>
    </source>
</evidence>
<evidence type="ECO:0000269" key="4">
    <source>
    </source>
</evidence>
<evidence type="ECO:0000269" key="5">
    <source>
    </source>
</evidence>
<evidence type="ECO:0000303" key="6">
    <source>
    </source>
</evidence>
<evidence type="ECO:0000305" key="7"/>
<evidence type="ECO:0000312" key="8">
    <source>
        <dbReference type="EMBL" id="CAG25107.1"/>
    </source>
</evidence>
<evidence type="ECO:0000312" key="9">
    <source>
        <dbReference type="Proteomes" id="UP000001450"/>
    </source>
</evidence>
<protein>
    <recommendedName>
        <fullName evidence="8">Putative amino acid transporter AAT1</fullName>
        <shortName evidence="6">PfAAT1</shortName>
    </recommendedName>
</protein>
<feature type="chain" id="PRO_0000460269" description="Putative amino acid transporter AAT1">
    <location>
        <begin position="1"/>
        <end position="606"/>
    </location>
</feature>
<feature type="transmembrane region" description="Helical" evidence="2">
    <location>
        <begin position="175"/>
        <end position="194"/>
    </location>
</feature>
<feature type="transmembrane region" description="Helical" evidence="2">
    <location>
        <begin position="200"/>
        <end position="225"/>
    </location>
</feature>
<feature type="transmembrane region" description="Helical" evidence="2">
    <location>
        <begin position="246"/>
        <end position="271"/>
    </location>
</feature>
<feature type="transmembrane region" description="Helical" evidence="2">
    <location>
        <begin position="283"/>
        <end position="301"/>
    </location>
</feature>
<feature type="transmembrane region" description="Helical" evidence="2">
    <location>
        <begin position="313"/>
        <end position="332"/>
    </location>
</feature>
<feature type="transmembrane region" description="Helical" evidence="2">
    <location>
        <begin position="352"/>
        <end position="372"/>
    </location>
</feature>
<feature type="transmembrane region" description="Helical" evidence="2">
    <location>
        <begin position="393"/>
        <end position="412"/>
    </location>
</feature>
<feature type="transmembrane region" description="Helical" evidence="2">
    <location>
        <begin position="428"/>
        <end position="449"/>
    </location>
</feature>
<feature type="transmembrane region" description="Helical" evidence="2">
    <location>
        <begin position="522"/>
        <end position="539"/>
    </location>
</feature>
<feature type="transmembrane region" description="Helical" evidence="2">
    <location>
        <begin position="545"/>
        <end position="567"/>
    </location>
</feature>
<feature type="transmembrane region" description="Helical" evidence="2">
    <location>
        <begin position="579"/>
        <end position="605"/>
    </location>
</feature>
<feature type="region of interest" description="Disordered" evidence="3">
    <location>
        <begin position="1"/>
        <end position="156"/>
    </location>
</feature>
<feature type="compositionally biased region" description="Basic and acidic residues" evidence="3">
    <location>
        <begin position="12"/>
        <end position="25"/>
    </location>
</feature>
<feature type="compositionally biased region" description="Basic and acidic residues" evidence="3">
    <location>
        <begin position="72"/>
        <end position="89"/>
    </location>
</feature>
<feature type="compositionally biased region" description="Acidic residues" evidence="3">
    <location>
        <begin position="140"/>
        <end position="149"/>
    </location>
</feature>
<feature type="sequence variant" description="Variant under strong directional selection, linked to chloroquine resistance, might play a role in the evolution of resistance to quinoline drugs in southeast Asia, significantly reduces parasite fitness and increases resistance to chloroquine." evidence="5">
    <original>S</original>
    <variation>L</variation>
    <location>
        <position position="258"/>
    </location>
</feature>
<feature type="sequence variant" description="Might play a role in the evolution of resistance to quinoline drugs in southeast Asia, moderately reduces parasite fitness and moderately increases resistance to chloroquine." evidence="5">
    <original>F</original>
    <variation>S</variation>
    <location>
        <position position="313"/>
    </location>
</feature>
<feature type="sequence variant" description="Might play a role in the evolution of resistance to quinoline drugs in southeast Asia." evidence="6">
    <original>Q</original>
    <variation>E</variation>
    <location>
        <position position="454"/>
    </location>
</feature>
<feature type="sequence variant" description="Might play a role in the evolution of resistance to quinoline drugs in southeast Asia." evidence="6">
    <original>K</original>
    <variation>N</variation>
    <location>
        <position position="541"/>
    </location>
</feature>
<feature type="mutagenesis site" description="Increases resistance to chloroquine." evidence="4 5">
    <original>T</original>
    <variation>E</variation>
    <location>
        <position position="162"/>
    </location>
</feature>
<dbReference type="EMBL" id="AL844505">
    <property type="protein sequence ID" value="CAG25107.1"/>
    <property type="molecule type" value="Genomic_DNA"/>
</dbReference>
<dbReference type="RefSeq" id="XP_966277.1">
    <property type="nucleotide sequence ID" value="XM_961184.1"/>
</dbReference>
<dbReference type="FunCoup" id="C6KTD0">
    <property type="interactions" value="2"/>
</dbReference>
<dbReference type="STRING" id="5833.PFF1430c"/>
<dbReference type="TCDB" id="2.A.18.6.25">
    <property type="family name" value="the amino acid/auxin permease (aaap) family"/>
</dbReference>
<dbReference type="PaxDb" id="5833-PFF1430c"/>
<dbReference type="EnsemblProtists" id="CAG25107">
    <property type="protein sequence ID" value="CAG25107"/>
    <property type="gene ID" value="PF3D7_0629500"/>
</dbReference>
<dbReference type="GeneID" id="3885735"/>
<dbReference type="KEGG" id="pfa:PF3D7_0629500"/>
<dbReference type="VEuPathDB" id="PlasmoDB:PF3D7_0629500"/>
<dbReference type="HOGENOM" id="CLU_417701_0_0_1"/>
<dbReference type="InParanoid" id="C6KTD0"/>
<dbReference type="OMA" id="IMFESIF"/>
<dbReference type="OrthoDB" id="438545at2759"/>
<dbReference type="PhylomeDB" id="C6KTD0"/>
<dbReference type="Proteomes" id="UP000001450">
    <property type="component" value="Chromosome 6"/>
</dbReference>
<dbReference type="GO" id="GO:0016020">
    <property type="term" value="C:membrane"/>
    <property type="evidence" value="ECO:0000318"/>
    <property type="project" value="GO_Central"/>
</dbReference>
<dbReference type="GO" id="GO:0005774">
    <property type="term" value="C:vacuolar membrane"/>
    <property type="evidence" value="ECO:0007669"/>
    <property type="project" value="UniProtKB-SubCell"/>
</dbReference>
<dbReference type="GO" id="GO:0015171">
    <property type="term" value="F:amino acid transmembrane transporter activity"/>
    <property type="evidence" value="ECO:0000250"/>
    <property type="project" value="GeneDB"/>
</dbReference>
<dbReference type="GO" id="GO:0061459">
    <property type="term" value="F:L-arginine transmembrane transporter activity"/>
    <property type="evidence" value="ECO:0000318"/>
    <property type="project" value="GO_Central"/>
</dbReference>
<dbReference type="GO" id="GO:0005313">
    <property type="term" value="F:L-glutamate transmembrane transporter activity"/>
    <property type="evidence" value="ECO:0000318"/>
    <property type="project" value="GO_Central"/>
</dbReference>
<dbReference type="GO" id="GO:0005290">
    <property type="term" value="F:L-histidine transmembrane transporter activity"/>
    <property type="evidence" value="ECO:0000318"/>
    <property type="project" value="GO_Central"/>
</dbReference>
<dbReference type="GO" id="GO:0015189">
    <property type="term" value="F:L-lysine transmembrane transporter activity"/>
    <property type="evidence" value="ECO:0000318"/>
    <property type="project" value="GO_Central"/>
</dbReference>
<dbReference type="GO" id="GO:0015194">
    <property type="term" value="F:L-serine transmembrane transporter activity"/>
    <property type="evidence" value="ECO:0000318"/>
    <property type="project" value="GO_Central"/>
</dbReference>
<dbReference type="GO" id="GO:0005302">
    <property type="term" value="F:L-tyrosine transmembrane transporter activity"/>
    <property type="evidence" value="ECO:0000318"/>
    <property type="project" value="GO_Central"/>
</dbReference>
<dbReference type="GO" id="GO:0003333">
    <property type="term" value="P:amino acid transmembrane transport"/>
    <property type="evidence" value="ECO:0000318"/>
    <property type="project" value="GO_Central"/>
</dbReference>
<dbReference type="GO" id="GO:0006865">
    <property type="term" value="P:amino acid transport"/>
    <property type="evidence" value="ECO:0000250"/>
    <property type="project" value="GeneDB"/>
</dbReference>
<dbReference type="InterPro" id="IPR013057">
    <property type="entry name" value="AA_transpt_TM"/>
</dbReference>
<dbReference type="PANTHER" id="PTHR22950">
    <property type="entry name" value="AMINO ACID TRANSPORTER"/>
    <property type="match status" value="1"/>
</dbReference>
<dbReference type="PANTHER" id="PTHR22950:SF678">
    <property type="entry name" value="VACUOLAR AMINO ACID TRANSPORTER 5-RELATED"/>
    <property type="match status" value="1"/>
</dbReference>
<dbReference type="Pfam" id="PF01490">
    <property type="entry name" value="Aa_trans"/>
    <property type="match status" value="1"/>
</dbReference>
<sequence>MNKKYGTSSNNHDNKKDKKNNADKNKNKKNTTTGEENKDSNKSLVNNDSKKNDSSKNKYNIVKANIKNIFASDKKNEKSDKNEKNESSKSSKNTETYTNVNDKKSNNLITKGSNDKKKKKKDSKKNSSNNNNNNTIVDISDGDYTNDEEGTNKPKRNWKGRTFSRFTPGGVRSSTVLFICTAIGVGFLSIPYVFSKLGIILSIILIILNAFESYVTTNILCTSSLEHNTFVYGNLLKKIGNKYYKTIIDFGLSFGFVSSYILILILISNFLSTIFYVFNFPTLFTNNVFLVILICLLILPITFRNKVGSLNHFLIFSLFSLSITVLTIGLQTKSYNNLLINKEVNLFKMDKHFFKCFNILLFSFSQQPNACFITGQFNQPTHRRLNKSTFRSVILQVIFYTLFGILGYFSFLNTAKDNIVLNYENSNVSILLCKFLLSLTFFFSVPLNFMGSYQSMLALGITTRDALYKLYTYIFRRTGYSANLSLLLSEYTNDPYQETHADNITEHSSVSESQTDDQNQRMWISVIVTIFCALIACKVKKLSNVIGIGGGITSTLISCLLPNLIYYKNRHNVSNKLKRYSTLFMLCFFSFMGFLSVVVTTLNLIL</sequence>
<name>AAT1_PLAF7</name>